<protein>
    <recommendedName>
        <fullName>Agamous-like MADS-box protein AGL8 homolog</fullName>
    </recommendedName>
    <alternativeName>
        <fullName>POTM1-1</fullName>
    </alternativeName>
</protein>
<comment type="function">
    <text>Probable transcription factor.</text>
</comment>
<comment type="subcellular location">
    <subcellularLocation>
        <location evidence="1">Nucleus</location>
    </subcellularLocation>
</comment>
<comment type="tissue specificity">
    <text evidence="3">Abundant in vegetative organs.</text>
</comment>
<comment type="developmental stage">
    <text evidence="4">Expressed during the early stages of tuberization.</text>
</comment>
<name>AGL8_SOLTU</name>
<accession>Q42429</accession>
<proteinExistence type="evidence at transcript level"/>
<sequence length="250" mass="28923">MGRGRVQLKRIENKINRQVTFSKRRSGLLKKAHEISVLCDAEVGLIVFSTKGKLFEYANDSCMERLLERYERYSFAERQLVPTDHTSPGSWTLEHAKLKARLEVLQRNQKHYVGEDLESLNMKELQNLEHQLDSALKHIRSRKNQLMHESISVLQKQDRALQEQNNQLSKKVKEREKEVAQQNQWDQQNHEINSSTFVLPQQLDSPHLGEAYQNTNVVDNGEVEGGNSSQQQGAANNTVMPQWMLRHLNG</sequence>
<reference key="1">
    <citation type="journal article" date="1995" name="Gene">
        <title>Nucleotide sequences of novel potato (Solanum tuberosum L.) MADS-box cDNAs and their expression in vegetative organs.</title>
        <authorList>
            <person name="Kang S.G."/>
            <person name="Hannapel D.J."/>
        </authorList>
    </citation>
    <scope>NUCLEOTIDE SEQUENCE [MRNA]</scope>
    <scope>TISSUE SPECIFICITY</scope>
</reference>
<reference key="2">
    <citation type="journal article" date="1996" name="Plant Mol. Biol.">
        <title>A novel MADS-box gene of potato (Solanum tuberosum L.) expressed during the early stages of tuberization.</title>
        <authorList>
            <person name="Kang S.G."/>
            <person name="Hannapel D.J."/>
        </authorList>
    </citation>
    <scope>NUCLEOTIDE SEQUENCE [MRNA]</scope>
    <scope>DEVELOPMENTAL STAGE</scope>
    <source>
        <strain>cv. Superior</strain>
    </source>
</reference>
<dbReference type="EMBL" id="U23758">
    <property type="protein sequence ID" value="AAA92840.1"/>
    <property type="molecule type" value="mRNA"/>
</dbReference>
<dbReference type="EMBL" id="U23757">
    <property type="protein sequence ID" value="AAA92839.1"/>
    <property type="molecule type" value="mRNA"/>
</dbReference>
<dbReference type="PIR" id="T07100">
    <property type="entry name" value="T07100"/>
</dbReference>
<dbReference type="RefSeq" id="NP_001275142.1">
    <property type="nucleotide sequence ID" value="NM_001288213.1"/>
</dbReference>
<dbReference type="SMR" id="Q42429"/>
<dbReference type="FunCoup" id="Q42429">
    <property type="interactions" value="16"/>
</dbReference>
<dbReference type="STRING" id="4113.Q42429"/>
<dbReference type="PaxDb" id="4113-PGSC0003DMT400010451"/>
<dbReference type="EnsemblPlants" id="RHC06H1G2441.2.1">
    <property type="protein sequence ID" value="RHC06H1G2441.2.1"/>
    <property type="gene ID" value="RHC06H1G2441.2"/>
</dbReference>
<dbReference type="GeneID" id="102577795"/>
<dbReference type="Gramene" id="RHC06H1G2441.2.1">
    <property type="protein sequence ID" value="RHC06H1G2441.2.1"/>
    <property type="gene ID" value="RHC06H1G2441.2"/>
</dbReference>
<dbReference type="KEGG" id="sot:102577795"/>
<dbReference type="eggNOG" id="KOG0014">
    <property type="taxonomic scope" value="Eukaryota"/>
</dbReference>
<dbReference type="InParanoid" id="Q42429"/>
<dbReference type="OrthoDB" id="1898716at2759"/>
<dbReference type="Proteomes" id="UP000011115">
    <property type="component" value="Unassembled WGS sequence"/>
</dbReference>
<dbReference type="ExpressionAtlas" id="Q42429">
    <property type="expression patterns" value="baseline"/>
</dbReference>
<dbReference type="GO" id="GO:0005634">
    <property type="term" value="C:nucleus"/>
    <property type="evidence" value="ECO:0007669"/>
    <property type="project" value="UniProtKB-SubCell"/>
</dbReference>
<dbReference type="GO" id="GO:0000981">
    <property type="term" value="F:DNA-binding transcription factor activity, RNA polymerase II-specific"/>
    <property type="evidence" value="ECO:0000318"/>
    <property type="project" value="GO_Central"/>
</dbReference>
<dbReference type="GO" id="GO:0046983">
    <property type="term" value="F:protein dimerization activity"/>
    <property type="evidence" value="ECO:0007669"/>
    <property type="project" value="InterPro"/>
</dbReference>
<dbReference type="GO" id="GO:0000978">
    <property type="term" value="F:RNA polymerase II cis-regulatory region sequence-specific DNA binding"/>
    <property type="evidence" value="ECO:0000318"/>
    <property type="project" value="GO_Central"/>
</dbReference>
<dbReference type="GO" id="GO:0045944">
    <property type="term" value="P:positive regulation of transcription by RNA polymerase II"/>
    <property type="evidence" value="ECO:0007669"/>
    <property type="project" value="InterPro"/>
</dbReference>
<dbReference type="GO" id="GO:0006357">
    <property type="term" value="P:regulation of transcription by RNA polymerase II"/>
    <property type="evidence" value="ECO:0000318"/>
    <property type="project" value="GO_Central"/>
</dbReference>
<dbReference type="CDD" id="cd00265">
    <property type="entry name" value="MADS_MEF2_like"/>
    <property type="match status" value="1"/>
</dbReference>
<dbReference type="FunFam" id="3.40.1810.10:FF:000003">
    <property type="entry name" value="MADS-box transcription factor MADS-MC"/>
    <property type="match status" value="1"/>
</dbReference>
<dbReference type="Gene3D" id="3.40.1810.10">
    <property type="entry name" value="Transcription factor, MADS-box"/>
    <property type="match status" value="1"/>
</dbReference>
<dbReference type="InterPro" id="IPR050142">
    <property type="entry name" value="MADS-box/MEF2_TF"/>
</dbReference>
<dbReference type="InterPro" id="IPR033896">
    <property type="entry name" value="MEF2-like_N"/>
</dbReference>
<dbReference type="InterPro" id="IPR002487">
    <property type="entry name" value="TF_Kbox"/>
</dbReference>
<dbReference type="InterPro" id="IPR002100">
    <property type="entry name" value="TF_MADSbox"/>
</dbReference>
<dbReference type="InterPro" id="IPR036879">
    <property type="entry name" value="TF_MADSbox_sf"/>
</dbReference>
<dbReference type="PANTHER" id="PTHR48019">
    <property type="entry name" value="SERUM RESPONSE FACTOR HOMOLOG"/>
    <property type="match status" value="1"/>
</dbReference>
<dbReference type="Pfam" id="PF01486">
    <property type="entry name" value="K-box"/>
    <property type="match status" value="1"/>
</dbReference>
<dbReference type="Pfam" id="PF00319">
    <property type="entry name" value="SRF-TF"/>
    <property type="match status" value="1"/>
</dbReference>
<dbReference type="PRINTS" id="PR00404">
    <property type="entry name" value="MADSDOMAIN"/>
</dbReference>
<dbReference type="SMART" id="SM00432">
    <property type="entry name" value="MADS"/>
    <property type="match status" value="1"/>
</dbReference>
<dbReference type="SUPFAM" id="SSF55455">
    <property type="entry name" value="SRF-like"/>
    <property type="match status" value="1"/>
</dbReference>
<dbReference type="PROSITE" id="PS51297">
    <property type="entry name" value="K_BOX"/>
    <property type="match status" value="1"/>
</dbReference>
<dbReference type="PROSITE" id="PS00350">
    <property type="entry name" value="MADS_BOX_1"/>
    <property type="match status" value="1"/>
</dbReference>
<dbReference type="PROSITE" id="PS50066">
    <property type="entry name" value="MADS_BOX_2"/>
    <property type="match status" value="1"/>
</dbReference>
<keyword id="KW-0238">DNA-binding</keyword>
<keyword id="KW-0539">Nucleus</keyword>
<keyword id="KW-1185">Reference proteome</keyword>
<keyword id="KW-0804">Transcription</keyword>
<keyword id="KW-0805">Transcription regulation</keyword>
<feature type="chain" id="PRO_0000199465" description="Agamous-like MADS-box protein AGL8 homolog">
    <location>
        <begin position="1"/>
        <end position="250"/>
    </location>
</feature>
<feature type="domain" description="MADS-box" evidence="1">
    <location>
        <begin position="3"/>
        <end position="57"/>
    </location>
</feature>
<feature type="domain" description="K-box" evidence="2">
    <location>
        <begin position="88"/>
        <end position="178"/>
    </location>
</feature>
<evidence type="ECO:0000255" key="1">
    <source>
        <dbReference type="PROSITE-ProRule" id="PRU00251"/>
    </source>
</evidence>
<evidence type="ECO:0000255" key="2">
    <source>
        <dbReference type="PROSITE-ProRule" id="PRU00629"/>
    </source>
</evidence>
<evidence type="ECO:0000269" key="3">
    <source>
    </source>
</evidence>
<evidence type="ECO:0000269" key="4">
    <source>
    </source>
</evidence>
<organism>
    <name type="scientific">Solanum tuberosum</name>
    <name type="common">Potato</name>
    <dbReference type="NCBI Taxonomy" id="4113"/>
    <lineage>
        <taxon>Eukaryota</taxon>
        <taxon>Viridiplantae</taxon>
        <taxon>Streptophyta</taxon>
        <taxon>Embryophyta</taxon>
        <taxon>Tracheophyta</taxon>
        <taxon>Spermatophyta</taxon>
        <taxon>Magnoliopsida</taxon>
        <taxon>eudicotyledons</taxon>
        <taxon>Gunneridae</taxon>
        <taxon>Pentapetalae</taxon>
        <taxon>asterids</taxon>
        <taxon>lamiids</taxon>
        <taxon>Solanales</taxon>
        <taxon>Solanaceae</taxon>
        <taxon>Solanoideae</taxon>
        <taxon>Solaneae</taxon>
        <taxon>Solanum</taxon>
    </lineage>
</organism>